<reference key="1">
    <citation type="journal article" date="2008" name="DNA Res.">
        <title>Complete genome sequence and comparative analysis of the wild-type commensal Escherichia coli strain SE11 isolated from a healthy adult.</title>
        <authorList>
            <person name="Oshima K."/>
            <person name="Toh H."/>
            <person name="Ogura Y."/>
            <person name="Sasamoto H."/>
            <person name="Morita H."/>
            <person name="Park S.-H."/>
            <person name="Ooka T."/>
            <person name="Iyoda S."/>
            <person name="Taylor T.D."/>
            <person name="Hayashi T."/>
            <person name="Itoh K."/>
            <person name="Hattori M."/>
        </authorList>
    </citation>
    <scope>NUCLEOTIDE SEQUENCE [LARGE SCALE GENOMIC DNA]</scope>
    <source>
        <strain>SE11</strain>
    </source>
</reference>
<accession>B6I7J8</accession>
<evidence type="ECO:0000255" key="1">
    <source>
        <dbReference type="HAMAP-Rule" id="MF_01166"/>
    </source>
</evidence>
<protein>
    <recommendedName>
        <fullName evidence="1">Bifunctional polymyxin resistance protein ArnA</fullName>
    </recommendedName>
    <domain>
        <recommendedName>
            <fullName evidence="1">UDP-4-amino-4-deoxy-L-arabinose formyltransferase</fullName>
            <ecNumber evidence="1">2.1.2.13</ecNumber>
        </recommendedName>
        <alternativeName>
            <fullName evidence="1">ArnAFT</fullName>
        </alternativeName>
        <alternativeName>
            <fullName evidence="1">UDP-L-Ara4N formyltransferase</fullName>
        </alternativeName>
    </domain>
    <domain>
        <recommendedName>
            <fullName evidence="1">UDP-glucuronic acid oxidase, UDP-4-keto-hexauronic acid decarboxylating</fullName>
            <ecNumber evidence="1">1.1.1.305</ecNumber>
        </recommendedName>
        <alternativeName>
            <fullName evidence="1">ArnADH</fullName>
        </alternativeName>
        <alternativeName>
            <fullName evidence="1">UDP-GlcUA decarboxylase</fullName>
        </alternativeName>
        <alternativeName>
            <fullName evidence="1">UDP-glucuronic acid dehydrogenase</fullName>
        </alternativeName>
    </domain>
</protein>
<proteinExistence type="inferred from homology"/>
<sequence>MKTVVFAYHDMGCLGIEALLAAGYEISAIFTHTDNPGEKAFYGSVARLAAERGIPVYAPDDVNHPLWVERIAQLSPDVIFSFYYRHLICDEILQLAPAGAFNLHGSLLPKYRGRAPLNWVLVNGETETGVTLHRMVKRADAGAIVAQLRIAIAPDDIAITLHHKLCHAARQLLEQTLPAIKHGNILEIAQRENEATCFGRRTPDDSFLEWHKPASVLHNMVRAVADPWPGAFSYVGNQKFTVWSSRVHPHASKAQPGSVISVAPLLIACGDGALEIVTGQAGDGITMQGSQLAQTLGLVQGSRLNSQPACTARRRTRVLILGVNGFIGNHLTERLLREDHYEVYGLDIGSDAISRFLNHPHFHFVEGDISIHSEWIEYHVKKCDVVLPLVAIATPIEYTRNPLRVFELDFEENLRIIRYCVKYRKRIIFPSTSEVYGMCSDKYFDEDHSNLIVGPVNKPRWIYSVSKQLLDRVIWAYGEKEGLQFTLFRPFNWMGPRLDNLNAARIGSSRAITQLILNLVEGSPIKLIDGGKQKRCFTDIRDGIEALYRIIENAGNRCDGEIINIGNPENEASIEELGEMLLASFEKHPLRHHFPPFAGFRVVESSSYYGKGYQDVEHRKPSIRNAHRCLDWEPKIDMQETIDETLDFFLRTVDLTDKPS</sequence>
<dbReference type="EC" id="2.1.2.13" evidence="1"/>
<dbReference type="EC" id="1.1.1.305" evidence="1"/>
<dbReference type="EMBL" id="AP009240">
    <property type="protein sequence ID" value="BAG78038.1"/>
    <property type="molecule type" value="Genomic_DNA"/>
</dbReference>
<dbReference type="RefSeq" id="WP_000860259.1">
    <property type="nucleotide sequence ID" value="NC_011415.1"/>
</dbReference>
<dbReference type="SMR" id="B6I7J8"/>
<dbReference type="KEGG" id="ecy:ECSE_2514"/>
<dbReference type="HOGENOM" id="CLU_007383_23_2_6"/>
<dbReference type="UniPathway" id="UPA00030"/>
<dbReference type="UniPathway" id="UPA00032">
    <property type="reaction ID" value="UER00492"/>
</dbReference>
<dbReference type="UniPathway" id="UPA00032">
    <property type="reaction ID" value="UER00494"/>
</dbReference>
<dbReference type="Proteomes" id="UP000008199">
    <property type="component" value="Chromosome"/>
</dbReference>
<dbReference type="GO" id="GO:0016020">
    <property type="term" value="C:membrane"/>
    <property type="evidence" value="ECO:0007669"/>
    <property type="project" value="GOC"/>
</dbReference>
<dbReference type="GO" id="GO:0016831">
    <property type="term" value="F:carboxy-lyase activity"/>
    <property type="evidence" value="ECO:0007669"/>
    <property type="project" value="InterPro"/>
</dbReference>
<dbReference type="GO" id="GO:0099619">
    <property type="term" value="F:UDP-4-amino-4-deoxy-L-arabinose formyltransferase activity"/>
    <property type="evidence" value="ECO:0007669"/>
    <property type="project" value="UniProtKB-EC"/>
</dbReference>
<dbReference type="GO" id="GO:0099618">
    <property type="term" value="F:UDP-glucuronate dehydrogenase activity"/>
    <property type="evidence" value="ECO:0007669"/>
    <property type="project" value="UniProtKB-EC"/>
</dbReference>
<dbReference type="GO" id="GO:0009245">
    <property type="term" value="P:lipid A biosynthetic process"/>
    <property type="evidence" value="ECO:0007669"/>
    <property type="project" value="UniProtKB-KW"/>
</dbReference>
<dbReference type="GO" id="GO:0009103">
    <property type="term" value="P:lipopolysaccharide biosynthetic process"/>
    <property type="evidence" value="ECO:0007669"/>
    <property type="project" value="UniProtKB-UniRule"/>
</dbReference>
<dbReference type="GO" id="GO:0046677">
    <property type="term" value="P:response to antibiotic"/>
    <property type="evidence" value="ECO:0007669"/>
    <property type="project" value="UniProtKB-KW"/>
</dbReference>
<dbReference type="CDD" id="cd08702">
    <property type="entry name" value="Arna_FMT_C"/>
    <property type="match status" value="1"/>
</dbReference>
<dbReference type="CDD" id="cd05257">
    <property type="entry name" value="Arna_like_SDR_e"/>
    <property type="match status" value="1"/>
</dbReference>
<dbReference type="CDD" id="cd08644">
    <property type="entry name" value="FMT_core_ArnA_N"/>
    <property type="match status" value="1"/>
</dbReference>
<dbReference type="FunFam" id="3.40.50.12230:FF:000002">
    <property type="entry name" value="Bifunctional polymyxin resistance protein ArnA"/>
    <property type="match status" value="1"/>
</dbReference>
<dbReference type="FunFam" id="3.40.50.720:FF:000197">
    <property type="entry name" value="Bifunctional polymyxin resistance protein ArnA"/>
    <property type="match status" value="1"/>
</dbReference>
<dbReference type="Gene3D" id="3.40.50.12230">
    <property type="match status" value="1"/>
</dbReference>
<dbReference type="Gene3D" id="3.40.50.720">
    <property type="entry name" value="NAD(P)-binding Rossmann-like Domain"/>
    <property type="match status" value="1"/>
</dbReference>
<dbReference type="HAMAP" id="MF_01166">
    <property type="entry name" value="ArnA"/>
    <property type="match status" value="1"/>
</dbReference>
<dbReference type="InterPro" id="IPR045869">
    <property type="entry name" value="Arna-like_SDR_e"/>
</dbReference>
<dbReference type="InterPro" id="IPR021168">
    <property type="entry name" value="Bifun_polymyxin_resist_ArnA"/>
</dbReference>
<dbReference type="InterPro" id="IPR001509">
    <property type="entry name" value="Epimerase_deHydtase"/>
</dbReference>
<dbReference type="InterPro" id="IPR005793">
    <property type="entry name" value="Formyl_trans_C"/>
</dbReference>
<dbReference type="InterPro" id="IPR002376">
    <property type="entry name" value="Formyl_transf_N"/>
</dbReference>
<dbReference type="InterPro" id="IPR036477">
    <property type="entry name" value="Formyl_transf_N_sf"/>
</dbReference>
<dbReference type="InterPro" id="IPR011034">
    <property type="entry name" value="Formyl_transferase-like_C_sf"/>
</dbReference>
<dbReference type="InterPro" id="IPR050177">
    <property type="entry name" value="Lipid_A_modif_metabolic_enz"/>
</dbReference>
<dbReference type="InterPro" id="IPR036291">
    <property type="entry name" value="NAD(P)-bd_dom_sf"/>
</dbReference>
<dbReference type="NCBIfam" id="NF005414">
    <property type="entry name" value="PRK06988.1"/>
    <property type="match status" value="1"/>
</dbReference>
<dbReference type="NCBIfam" id="NF005998">
    <property type="entry name" value="PRK08125.1"/>
    <property type="match status" value="1"/>
</dbReference>
<dbReference type="NCBIfam" id="NF008872">
    <property type="entry name" value="PRK11908.1"/>
    <property type="match status" value="1"/>
</dbReference>
<dbReference type="PANTHER" id="PTHR43245">
    <property type="entry name" value="BIFUNCTIONAL POLYMYXIN RESISTANCE PROTEIN ARNA"/>
    <property type="match status" value="1"/>
</dbReference>
<dbReference type="PANTHER" id="PTHR43245:SF13">
    <property type="entry name" value="UDP-D-APIOSE_UDP-D-XYLOSE SYNTHASE 2"/>
    <property type="match status" value="1"/>
</dbReference>
<dbReference type="Pfam" id="PF01370">
    <property type="entry name" value="Epimerase"/>
    <property type="match status" value="1"/>
</dbReference>
<dbReference type="Pfam" id="PF02911">
    <property type="entry name" value="Formyl_trans_C"/>
    <property type="match status" value="1"/>
</dbReference>
<dbReference type="Pfam" id="PF00551">
    <property type="entry name" value="Formyl_trans_N"/>
    <property type="match status" value="1"/>
</dbReference>
<dbReference type="PIRSF" id="PIRSF036506">
    <property type="entry name" value="Bifun_polymyxin_resist_ArnA"/>
    <property type="match status" value="1"/>
</dbReference>
<dbReference type="SUPFAM" id="SSF50486">
    <property type="entry name" value="FMT C-terminal domain-like"/>
    <property type="match status" value="1"/>
</dbReference>
<dbReference type="SUPFAM" id="SSF53328">
    <property type="entry name" value="Formyltransferase"/>
    <property type="match status" value="1"/>
</dbReference>
<dbReference type="SUPFAM" id="SSF51735">
    <property type="entry name" value="NAD(P)-binding Rossmann-fold domains"/>
    <property type="match status" value="1"/>
</dbReference>
<organism>
    <name type="scientific">Escherichia coli (strain SE11)</name>
    <dbReference type="NCBI Taxonomy" id="409438"/>
    <lineage>
        <taxon>Bacteria</taxon>
        <taxon>Pseudomonadati</taxon>
        <taxon>Pseudomonadota</taxon>
        <taxon>Gammaproteobacteria</taxon>
        <taxon>Enterobacterales</taxon>
        <taxon>Enterobacteriaceae</taxon>
        <taxon>Escherichia</taxon>
    </lineage>
</organism>
<name>ARNA_ECOSE</name>
<comment type="function">
    <text evidence="1">Bifunctional enzyme that catalyzes the oxidative decarboxylation of UDP-glucuronic acid (UDP-GlcUA) to UDP-4-keto-arabinose (UDP-Ara4O) and the addition of a formyl group to UDP-4-amino-4-deoxy-L-arabinose (UDP-L-Ara4N) to form UDP-L-4-formamido-arabinose (UDP-L-Ara4FN). The modified arabinose is attached to lipid A and is required for resistance to polymyxin and cationic antimicrobial peptides.</text>
</comment>
<comment type="catalytic activity">
    <reaction evidence="1">
        <text>UDP-alpha-D-glucuronate + NAD(+) = UDP-beta-L-threo-pentopyranos-4-ulose + CO2 + NADH</text>
        <dbReference type="Rhea" id="RHEA:24702"/>
        <dbReference type="ChEBI" id="CHEBI:16526"/>
        <dbReference type="ChEBI" id="CHEBI:57540"/>
        <dbReference type="ChEBI" id="CHEBI:57945"/>
        <dbReference type="ChEBI" id="CHEBI:58052"/>
        <dbReference type="ChEBI" id="CHEBI:58710"/>
        <dbReference type="EC" id="1.1.1.305"/>
    </reaction>
</comment>
<comment type="catalytic activity">
    <reaction evidence="1">
        <text>UDP-4-amino-4-deoxy-beta-L-arabinose + (6R)-10-formyltetrahydrofolate = UDP-4-deoxy-4-formamido-beta-L-arabinose + (6S)-5,6,7,8-tetrahydrofolate + H(+)</text>
        <dbReference type="Rhea" id="RHEA:24706"/>
        <dbReference type="ChEBI" id="CHEBI:15378"/>
        <dbReference type="ChEBI" id="CHEBI:57453"/>
        <dbReference type="ChEBI" id="CHEBI:58708"/>
        <dbReference type="ChEBI" id="CHEBI:58709"/>
        <dbReference type="ChEBI" id="CHEBI:195366"/>
        <dbReference type="EC" id="2.1.2.13"/>
    </reaction>
</comment>
<comment type="pathway">
    <text evidence="1">Nucleotide-sugar biosynthesis; UDP-4-deoxy-4-formamido-beta-L-arabinose biosynthesis; UDP-4-deoxy-4-formamido-beta-L-arabinose from UDP-alpha-D-glucuronate: step 1/3.</text>
</comment>
<comment type="pathway">
    <text evidence="1">Nucleotide-sugar biosynthesis; UDP-4-deoxy-4-formamido-beta-L-arabinose biosynthesis; UDP-4-deoxy-4-formamido-beta-L-arabinose from UDP-alpha-D-glucuronate: step 3/3.</text>
</comment>
<comment type="pathway">
    <text evidence="1">Bacterial outer membrane biogenesis; lipopolysaccharide biosynthesis.</text>
</comment>
<comment type="subunit">
    <text evidence="1">Homohexamer, formed by a dimer of trimers.</text>
</comment>
<comment type="similarity">
    <text evidence="1">In the N-terminal section; belongs to the Fmt family. UDP-L-Ara4N formyltransferase subfamily.</text>
</comment>
<comment type="similarity">
    <text evidence="1">In the C-terminal section; belongs to the NAD(P)-dependent epimerase/dehydratase family. UDP-glucuronic acid decarboxylase subfamily.</text>
</comment>
<feature type="chain" id="PRO_1000137939" description="Bifunctional polymyxin resistance protein ArnA">
    <location>
        <begin position="1"/>
        <end position="660"/>
    </location>
</feature>
<feature type="region of interest" description="Formyltransferase ArnAFT">
    <location>
        <begin position="1"/>
        <end position="304"/>
    </location>
</feature>
<feature type="region of interest" description="Dehydrogenase ArnADH">
    <location>
        <begin position="314"/>
        <end position="660"/>
    </location>
</feature>
<feature type="active site" description="Proton donor; for formyltransferase activity" evidence="1">
    <location>
        <position position="104"/>
    </location>
</feature>
<feature type="active site" description="Proton acceptor; for decarboxylase activity" evidence="1">
    <location>
        <position position="434"/>
    </location>
</feature>
<feature type="active site" description="Proton donor; for decarboxylase activity" evidence="1">
    <location>
        <position position="619"/>
    </location>
</feature>
<feature type="binding site" evidence="1">
    <location>
        <begin position="86"/>
        <end position="88"/>
    </location>
    <ligand>
        <name>(6R)-10-formyltetrahydrofolate</name>
        <dbReference type="ChEBI" id="CHEBI:195366"/>
    </ligand>
</feature>
<feature type="binding site" evidence="1">
    <location>
        <position position="114"/>
    </location>
    <ligand>
        <name>(6R)-10-formyltetrahydrofolate</name>
        <dbReference type="ChEBI" id="CHEBI:195366"/>
    </ligand>
</feature>
<feature type="binding site" evidence="1">
    <location>
        <begin position="136"/>
        <end position="140"/>
    </location>
    <ligand>
        <name>(6R)-10-formyltetrahydrofolate</name>
        <dbReference type="ChEBI" id="CHEBI:195366"/>
    </ligand>
</feature>
<feature type="binding site" evidence="1">
    <location>
        <position position="347"/>
    </location>
    <ligand>
        <name>NAD(+)</name>
        <dbReference type="ChEBI" id="CHEBI:57540"/>
    </ligand>
</feature>
<feature type="binding site" evidence="1">
    <location>
        <begin position="368"/>
        <end position="369"/>
    </location>
    <ligand>
        <name>NAD(+)</name>
        <dbReference type="ChEBI" id="CHEBI:57540"/>
    </ligand>
</feature>
<feature type="binding site" evidence="1">
    <location>
        <position position="393"/>
    </location>
    <ligand>
        <name>UDP-alpha-D-glucuronate</name>
        <dbReference type="ChEBI" id="CHEBI:58052"/>
    </ligand>
</feature>
<feature type="binding site" evidence="1">
    <location>
        <position position="398"/>
    </location>
    <ligand>
        <name>UDP-alpha-D-glucuronate</name>
        <dbReference type="ChEBI" id="CHEBI:58052"/>
    </ligand>
</feature>
<feature type="binding site" evidence="1">
    <location>
        <begin position="432"/>
        <end position="433"/>
    </location>
    <ligand>
        <name>UDP-alpha-D-glucuronate</name>
        <dbReference type="ChEBI" id="CHEBI:58052"/>
    </ligand>
</feature>
<feature type="binding site" evidence="1">
    <location>
        <position position="460"/>
    </location>
    <ligand>
        <name>UDP-alpha-D-glucuronate</name>
        <dbReference type="ChEBI" id="CHEBI:58052"/>
    </ligand>
</feature>
<feature type="binding site" evidence="1">
    <location>
        <position position="492"/>
    </location>
    <ligand>
        <name>UDP-alpha-D-glucuronate</name>
        <dbReference type="ChEBI" id="CHEBI:58052"/>
    </ligand>
</feature>
<feature type="binding site" evidence="1">
    <location>
        <begin position="526"/>
        <end position="535"/>
    </location>
    <ligand>
        <name>UDP-alpha-D-glucuronate</name>
        <dbReference type="ChEBI" id="CHEBI:58052"/>
    </ligand>
</feature>
<feature type="binding site" evidence="1">
    <location>
        <position position="613"/>
    </location>
    <ligand>
        <name>UDP-alpha-D-glucuronate</name>
        <dbReference type="ChEBI" id="CHEBI:58052"/>
    </ligand>
</feature>
<feature type="site" description="Transition state stabilizer" evidence="1">
    <location>
        <position position="102"/>
    </location>
</feature>
<feature type="site" description="Raises pKa of active site His" evidence="1">
    <location>
        <position position="140"/>
    </location>
</feature>
<gene>
    <name evidence="1" type="primary">arnA</name>
    <name type="ordered locus">ECSE_2514</name>
</gene>
<keyword id="KW-0046">Antibiotic resistance</keyword>
<keyword id="KW-0441">Lipid A biosynthesis</keyword>
<keyword id="KW-0444">Lipid biosynthesis</keyword>
<keyword id="KW-0443">Lipid metabolism</keyword>
<keyword id="KW-0448">Lipopolysaccharide biosynthesis</keyword>
<keyword id="KW-0511">Multifunctional enzyme</keyword>
<keyword id="KW-0520">NAD</keyword>
<keyword id="KW-0560">Oxidoreductase</keyword>
<keyword id="KW-0808">Transferase</keyword>